<keyword id="KW-0285">Flavoprotein</keyword>
<keyword id="KW-0288">FMN</keyword>
<keyword id="KW-0560">Oxidoreductase</keyword>
<keyword id="KW-0664">Pyridoxine biosynthesis</keyword>
<organism>
    <name type="scientific">Bacteroides fragilis (strain ATCC 25285 / DSM 2151 / CCUG 4856 / JCM 11019 / LMG 10263 / NCTC 9343 / Onslow / VPI 2553 / EN-2)</name>
    <dbReference type="NCBI Taxonomy" id="272559"/>
    <lineage>
        <taxon>Bacteria</taxon>
        <taxon>Pseudomonadati</taxon>
        <taxon>Bacteroidota</taxon>
        <taxon>Bacteroidia</taxon>
        <taxon>Bacteroidales</taxon>
        <taxon>Bacteroidaceae</taxon>
        <taxon>Bacteroides</taxon>
    </lineage>
</organism>
<gene>
    <name evidence="1" type="primary">pdxH</name>
    <name type="ordered locus">BF1385</name>
</gene>
<proteinExistence type="inferred from homology"/>
<accession>Q5LFJ5</accession>
<name>PDXH_BACFN</name>
<evidence type="ECO:0000255" key="1">
    <source>
        <dbReference type="HAMAP-Rule" id="MF_01629"/>
    </source>
</evidence>
<comment type="function">
    <text evidence="1">Catalyzes the oxidation of either pyridoxine 5'-phosphate (PNP) or pyridoxamine 5'-phosphate (PMP) into pyridoxal 5'-phosphate (PLP).</text>
</comment>
<comment type="catalytic activity">
    <reaction evidence="1">
        <text>pyridoxamine 5'-phosphate + O2 + H2O = pyridoxal 5'-phosphate + H2O2 + NH4(+)</text>
        <dbReference type="Rhea" id="RHEA:15817"/>
        <dbReference type="ChEBI" id="CHEBI:15377"/>
        <dbReference type="ChEBI" id="CHEBI:15379"/>
        <dbReference type="ChEBI" id="CHEBI:16240"/>
        <dbReference type="ChEBI" id="CHEBI:28938"/>
        <dbReference type="ChEBI" id="CHEBI:58451"/>
        <dbReference type="ChEBI" id="CHEBI:597326"/>
        <dbReference type="EC" id="1.4.3.5"/>
    </reaction>
</comment>
<comment type="catalytic activity">
    <reaction evidence="1">
        <text>pyridoxine 5'-phosphate + O2 = pyridoxal 5'-phosphate + H2O2</text>
        <dbReference type="Rhea" id="RHEA:15149"/>
        <dbReference type="ChEBI" id="CHEBI:15379"/>
        <dbReference type="ChEBI" id="CHEBI:16240"/>
        <dbReference type="ChEBI" id="CHEBI:58589"/>
        <dbReference type="ChEBI" id="CHEBI:597326"/>
        <dbReference type="EC" id="1.4.3.5"/>
    </reaction>
</comment>
<comment type="cofactor">
    <cofactor evidence="1">
        <name>FMN</name>
        <dbReference type="ChEBI" id="CHEBI:58210"/>
    </cofactor>
    <text evidence="1">Binds 1 FMN per subunit.</text>
</comment>
<comment type="pathway">
    <text evidence="1">Cofactor metabolism; pyridoxal 5'-phosphate salvage; pyridoxal 5'-phosphate from pyridoxamine 5'-phosphate: step 1/1.</text>
</comment>
<comment type="pathway">
    <text evidence="1">Cofactor metabolism; pyridoxal 5'-phosphate salvage; pyridoxal 5'-phosphate from pyridoxine 5'-phosphate: step 1/1.</text>
</comment>
<comment type="subunit">
    <text evidence="1">Homodimer.</text>
</comment>
<comment type="similarity">
    <text evidence="1">Belongs to the pyridoxamine 5'-phosphate oxidase family.</text>
</comment>
<protein>
    <recommendedName>
        <fullName evidence="1">Pyridoxine/pyridoxamine 5'-phosphate oxidase</fullName>
        <ecNumber evidence="1">1.4.3.5</ecNumber>
    </recommendedName>
    <alternativeName>
        <fullName evidence="1">PNP/PMP oxidase</fullName>
        <shortName evidence="1">PNPOx</shortName>
    </alternativeName>
    <alternativeName>
        <fullName evidence="1">Pyridoxal 5'-phosphate synthase</fullName>
    </alternativeName>
</protein>
<feature type="chain" id="PRO_0000167682" description="Pyridoxine/pyridoxamine 5'-phosphate oxidase">
    <location>
        <begin position="1"/>
        <end position="235"/>
    </location>
</feature>
<feature type="binding site" evidence="1">
    <location>
        <begin position="30"/>
        <end position="33"/>
    </location>
    <ligand>
        <name>substrate</name>
    </ligand>
</feature>
<feature type="binding site" evidence="1">
    <location>
        <begin position="83"/>
        <end position="88"/>
    </location>
    <ligand>
        <name>FMN</name>
        <dbReference type="ChEBI" id="CHEBI:58210"/>
    </ligand>
</feature>
<feature type="binding site" evidence="1">
    <location>
        <position position="88"/>
    </location>
    <ligand>
        <name>substrate</name>
    </ligand>
</feature>
<feature type="binding site" evidence="1">
    <location>
        <begin position="98"/>
        <end position="99"/>
    </location>
    <ligand>
        <name>FMN</name>
        <dbReference type="ChEBI" id="CHEBI:58210"/>
    </ligand>
</feature>
<feature type="binding site" evidence="1">
    <location>
        <position position="104"/>
    </location>
    <ligand>
        <name>FMN</name>
        <dbReference type="ChEBI" id="CHEBI:58210"/>
    </ligand>
</feature>
<feature type="binding site" evidence="1">
    <location>
        <position position="105"/>
    </location>
    <ligand>
        <name>FMN</name>
        <dbReference type="ChEBI" id="CHEBI:58210"/>
    </ligand>
</feature>
<feature type="binding site" evidence="1">
    <location>
        <position position="127"/>
    </location>
    <ligand>
        <name>FMN</name>
        <dbReference type="ChEBI" id="CHEBI:58210"/>
    </ligand>
</feature>
<feature type="binding site" evidence="1">
    <location>
        <position position="145"/>
    </location>
    <ligand>
        <name>substrate</name>
    </ligand>
</feature>
<feature type="binding site" evidence="1">
    <location>
        <position position="149"/>
    </location>
    <ligand>
        <name>substrate</name>
    </ligand>
</feature>
<feature type="binding site" evidence="1">
    <location>
        <position position="153"/>
    </location>
    <ligand>
        <name>substrate</name>
    </ligand>
</feature>
<feature type="binding site" evidence="1">
    <location>
        <begin position="162"/>
        <end position="163"/>
    </location>
    <ligand>
        <name>FMN</name>
        <dbReference type="ChEBI" id="CHEBI:58210"/>
    </ligand>
</feature>
<feature type="binding site" evidence="1">
    <location>
        <position position="207"/>
    </location>
    <ligand>
        <name>FMN</name>
        <dbReference type="ChEBI" id="CHEBI:58210"/>
    </ligand>
</feature>
<feature type="binding site" evidence="1">
    <location>
        <begin position="213"/>
        <end position="215"/>
    </location>
    <ligand>
        <name>substrate</name>
    </ligand>
</feature>
<feature type="binding site" evidence="1">
    <location>
        <position position="217"/>
    </location>
    <ligand>
        <name>FMN</name>
        <dbReference type="ChEBI" id="CHEBI:58210"/>
    </ligand>
</feature>
<dbReference type="EC" id="1.4.3.5" evidence="1"/>
<dbReference type="EMBL" id="CR626927">
    <property type="protein sequence ID" value="CAH07098.1"/>
    <property type="molecule type" value="Genomic_DNA"/>
</dbReference>
<dbReference type="RefSeq" id="WP_005786189.1">
    <property type="nucleotide sequence ID" value="NZ_UFTH01000001.1"/>
</dbReference>
<dbReference type="SMR" id="Q5LFJ5"/>
<dbReference type="PaxDb" id="272559-BF9343_1317"/>
<dbReference type="GeneID" id="60368628"/>
<dbReference type="KEGG" id="bfs:BF9343_1317"/>
<dbReference type="eggNOG" id="COG0259">
    <property type="taxonomic scope" value="Bacteria"/>
</dbReference>
<dbReference type="HOGENOM" id="CLU_032263_2_2_10"/>
<dbReference type="UniPathway" id="UPA01068">
    <property type="reaction ID" value="UER00304"/>
</dbReference>
<dbReference type="UniPathway" id="UPA01068">
    <property type="reaction ID" value="UER00305"/>
</dbReference>
<dbReference type="Proteomes" id="UP000006731">
    <property type="component" value="Chromosome"/>
</dbReference>
<dbReference type="GO" id="GO:0010181">
    <property type="term" value="F:FMN binding"/>
    <property type="evidence" value="ECO:0007669"/>
    <property type="project" value="UniProtKB-UniRule"/>
</dbReference>
<dbReference type="GO" id="GO:0004733">
    <property type="term" value="F:pyridoxamine phosphate oxidase activity"/>
    <property type="evidence" value="ECO:0007669"/>
    <property type="project" value="UniProtKB-UniRule"/>
</dbReference>
<dbReference type="GO" id="GO:0008615">
    <property type="term" value="P:pyridoxine biosynthetic process"/>
    <property type="evidence" value="ECO:0007669"/>
    <property type="project" value="UniProtKB-KW"/>
</dbReference>
<dbReference type="Gene3D" id="2.30.110.10">
    <property type="entry name" value="Electron Transport, Fmn-binding Protein, Chain A"/>
    <property type="match status" value="1"/>
</dbReference>
<dbReference type="HAMAP" id="MF_01629">
    <property type="entry name" value="PdxH"/>
    <property type="match status" value="1"/>
</dbReference>
<dbReference type="InterPro" id="IPR000659">
    <property type="entry name" value="Pyridox_Oxase"/>
</dbReference>
<dbReference type="InterPro" id="IPR019740">
    <property type="entry name" value="Pyridox_Oxase_CS"/>
</dbReference>
<dbReference type="InterPro" id="IPR011576">
    <property type="entry name" value="Pyridox_Oxase_N"/>
</dbReference>
<dbReference type="InterPro" id="IPR019576">
    <property type="entry name" value="Pyridoxamine_oxidase_dimer_C"/>
</dbReference>
<dbReference type="InterPro" id="IPR012349">
    <property type="entry name" value="Split_barrel_FMN-bd"/>
</dbReference>
<dbReference type="NCBIfam" id="TIGR00558">
    <property type="entry name" value="pdxH"/>
    <property type="match status" value="1"/>
</dbReference>
<dbReference type="NCBIfam" id="NF004231">
    <property type="entry name" value="PRK05679.1"/>
    <property type="match status" value="1"/>
</dbReference>
<dbReference type="PANTHER" id="PTHR10851:SF0">
    <property type="entry name" value="PYRIDOXINE-5'-PHOSPHATE OXIDASE"/>
    <property type="match status" value="1"/>
</dbReference>
<dbReference type="PANTHER" id="PTHR10851">
    <property type="entry name" value="PYRIDOXINE-5-PHOSPHATE OXIDASE"/>
    <property type="match status" value="1"/>
</dbReference>
<dbReference type="Pfam" id="PF10590">
    <property type="entry name" value="PNP_phzG_C"/>
    <property type="match status" value="1"/>
</dbReference>
<dbReference type="Pfam" id="PF01243">
    <property type="entry name" value="PNPOx_N"/>
    <property type="match status" value="1"/>
</dbReference>
<dbReference type="PIRSF" id="PIRSF000190">
    <property type="entry name" value="Pyd_amn-ph_oxd"/>
    <property type="match status" value="1"/>
</dbReference>
<dbReference type="SUPFAM" id="SSF50475">
    <property type="entry name" value="FMN-binding split barrel"/>
    <property type="match status" value="1"/>
</dbReference>
<dbReference type="PROSITE" id="PS01064">
    <property type="entry name" value="PYRIDOX_OXIDASE"/>
    <property type="match status" value="1"/>
</dbReference>
<reference key="1">
    <citation type="journal article" date="2005" name="Science">
        <title>Extensive DNA inversions in the B. fragilis genome control variable gene expression.</title>
        <authorList>
            <person name="Cerdeno-Tarraga A.-M."/>
            <person name="Patrick S."/>
            <person name="Crossman L.C."/>
            <person name="Blakely G."/>
            <person name="Abratt V."/>
            <person name="Lennard N."/>
            <person name="Poxton I."/>
            <person name="Duerden B."/>
            <person name="Harris B."/>
            <person name="Quail M.A."/>
            <person name="Barron A."/>
            <person name="Clark L."/>
            <person name="Corton C."/>
            <person name="Doggett J."/>
            <person name="Holden M.T.G."/>
            <person name="Larke N."/>
            <person name="Line A."/>
            <person name="Lord A."/>
            <person name="Norbertczak H."/>
            <person name="Ormond D."/>
            <person name="Price C."/>
            <person name="Rabbinowitsch E."/>
            <person name="Woodward J."/>
            <person name="Barrell B.G."/>
            <person name="Parkhill J."/>
        </authorList>
    </citation>
    <scope>NUCLEOTIDE SEQUENCE [LARGE SCALE GENOMIC DNA]</scope>
    <source>
        <strain>ATCC 25285 / DSM 2151 / CCUG 4856 / JCM 11019 / LMG 10263 / NCTC 9343 / Onslow / VPI 2553 / EN-2</strain>
    </source>
</reference>
<sequence>MSTDHVSTHPDSPLHGNGIGSEAINLAAIRQEYTKGGLKEGDLPDNPLSLFNRWLHEAIDAQVDEPTAMLVGTVSPEGQPSTRTVLLKDLHDGKFIFYTNYESRKGTHLAKNPYISLSFVWHALERQVHIEGIASKVPAGESDTYFRQRPYKSRIGARISPQSRPLKSRMQLIRNFVAEAARWVGREVERPAHWGGYAVTPHRIEFWQGRANRLHDRFLYSLQPDGSWQKERLAP</sequence>